<protein>
    <recommendedName>
        <fullName>Small glutamine-rich tetratricopeptide repeat-containing protein 2</fullName>
    </recommendedName>
</protein>
<keyword id="KW-1185">Reference proteome</keyword>
<keyword id="KW-0677">Repeat</keyword>
<keyword id="KW-0802">TPR repeat</keyword>
<name>SGT2_MYCMD</name>
<sequence length="352" mass="35776">MSQQTPLAYAVAQWLQQSSTSVPADQKAKLQQAAKSVSEAFGVDTSSAEQQAQYGSGPGLQAIFDIFLKTQAKMGAAPAPAAASSSSTAPAAAAATPSDEDLAKAEQLKAEGNKAMSAKDYGAAIEAYGKAIELNPNSPVYFSNRAAAFSQIGQHDSAIDDAKQASKIDPKFGKAYSRLGHALFSSGRYQEAVEAYQKGVEVDPSNEVLKKGLAASKEQLSSSSSSNANDATASRGAADAVSAPSAGADAGAGAGGFPNFGGGAGGMPDLAAMMNNPMIAQMAQNLMSNPDSLASLMNNPMLRQAAERFGSGGGMPDMSSMMNDPALRDMARNFMGGAGRGAGGNGGNNMYG</sequence>
<proteinExistence type="inferred from homology"/>
<organism>
    <name type="scientific">Mycosarcoma maydis</name>
    <name type="common">Corn smut fungus</name>
    <name type="synonym">Ustilago maydis</name>
    <dbReference type="NCBI Taxonomy" id="5270"/>
    <lineage>
        <taxon>Eukaryota</taxon>
        <taxon>Fungi</taxon>
        <taxon>Dikarya</taxon>
        <taxon>Basidiomycota</taxon>
        <taxon>Ustilaginomycotina</taxon>
        <taxon>Ustilaginomycetes</taxon>
        <taxon>Ustilaginales</taxon>
        <taxon>Ustilaginaceae</taxon>
        <taxon>Mycosarcoma</taxon>
    </lineage>
</organism>
<comment type="function">
    <text evidence="1">Co-chaperone that binds to the molecular chaperone Hsp70 and regulates Hsp70 ATPase activity.</text>
</comment>
<comment type="similarity">
    <text evidence="3">Belongs to the SGT family.</text>
</comment>
<evidence type="ECO:0000250" key="1"/>
<evidence type="ECO:0000256" key="2">
    <source>
        <dbReference type="SAM" id="MobiDB-lite"/>
    </source>
</evidence>
<evidence type="ECO:0000305" key="3"/>
<accession>P0CT30</accession>
<accession>A0A0D1CHA9</accession>
<accession>Q4P3F4</accession>
<feature type="chain" id="PRO_0000423952" description="Small glutamine-rich tetratricopeptide repeat-containing protein 2">
    <location>
        <begin position="1"/>
        <end position="352"/>
    </location>
</feature>
<feature type="repeat" description="TPR 1">
    <location>
        <begin position="105"/>
        <end position="138"/>
    </location>
</feature>
<feature type="repeat" description="TPR 2">
    <location>
        <begin position="140"/>
        <end position="172"/>
    </location>
</feature>
<feature type="repeat" description="TPR 3">
    <location>
        <begin position="173"/>
        <end position="206"/>
    </location>
</feature>
<feature type="region of interest" description="Disordered" evidence="2">
    <location>
        <begin position="80"/>
        <end position="103"/>
    </location>
</feature>
<feature type="region of interest" description="Disordered" evidence="2">
    <location>
        <begin position="217"/>
        <end position="236"/>
    </location>
</feature>
<feature type="compositionally biased region" description="Low complexity" evidence="2">
    <location>
        <begin position="80"/>
        <end position="97"/>
    </location>
</feature>
<gene>
    <name type="ORF">UMAG_10205</name>
</gene>
<dbReference type="EMBL" id="CM003158">
    <property type="protein sequence ID" value="KIS66363.1"/>
    <property type="molecule type" value="Genomic_DNA"/>
</dbReference>
<dbReference type="RefSeq" id="XP_011392129.1">
    <property type="nucleotide sequence ID" value="XM_011393827.1"/>
</dbReference>
<dbReference type="SMR" id="P0CT30"/>
<dbReference type="FunCoup" id="P0CT30">
    <property type="interactions" value="129"/>
</dbReference>
<dbReference type="STRING" id="237631.P0CT30"/>
<dbReference type="EnsemblFungi" id="KIS66363">
    <property type="protein sequence ID" value="KIS66363"/>
    <property type="gene ID" value="UMAG_10205"/>
</dbReference>
<dbReference type="GeneID" id="23566268"/>
<dbReference type="KEGG" id="uma:UMAG_10205"/>
<dbReference type="VEuPathDB" id="FungiDB:UMAG_10205"/>
<dbReference type="eggNOG" id="KOG0553">
    <property type="taxonomic scope" value="Eukaryota"/>
</dbReference>
<dbReference type="eggNOG" id="KOG2112">
    <property type="taxonomic scope" value="Eukaryota"/>
</dbReference>
<dbReference type="InParanoid" id="P0CT30"/>
<dbReference type="OrthoDB" id="2335338at2759"/>
<dbReference type="Proteomes" id="UP000000561">
    <property type="component" value="Chromosome 19"/>
</dbReference>
<dbReference type="GO" id="GO:0016020">
    <property type="term" value="C:membrane"/>
    <property type="evidence" value="ECO:0000318"/>
    <property type="project" value="GO_Central"/>
</dbReference>
<dbReference type="GO" id="GO:0072380">
    <property type="term" value="C:TRC complex"/>
    <property type="evidence" value="ECO:0000318"/>
    <property type="project" value="GO_Central"/>
</dbReference>
<dbReference type="GO" id="GO:0060090">
    <property type="term" value="F:molecular adaptor activity"/>
    <property type="evidence" value="ECO:0000318"/>
    <property type="project" value="GO_Central"/>
</dbReference>
<dbReference type="GO" id="GO:0006620">
    <property type="term" value="P:post-translational protein targeting to endoplasmic reticulum membrane"/>
    <property type="evidence" value="ECO:0000318"/>
    <property type="project" value="GO_Central"/>
</dbReference>
<dbReference type="FunFam" id="1.25.40.10:FF:000207">
    <property type="entry name" value="Small glutamine-rich tetratricopeptide repeat-containing protein"/>
    <property type="match status" value="1"/>
</dbReference>
<dbReference type="FunFam" id="1.10.260.100:FF:000011">
    <property type="entry name" value="TPR Domain containing protein"/>
    <property type="match status" value="1"/>
</dbReference>
<dbReference type="Gene3D" id="1.10.260.100">
    <property type="match status" value="1"/>
</dbReference>
<dbReference type="Gene3D" id="1.25.40.10">
    <property type="entry name" value="Tetratricopeptide repeat domain"/>
    <property type="match status" value="1"/>
</dbReference>
<dbReference type="InterPro" id="IPR047150">
    <property type="entry name" value="SGT"/>
</dbReference>
<dbReference type="InterPro" id="IPR032374">
    <property type="entry name" value="SGTA_dimer"/>
</dbReference>
<dbReference type="InterPro" id="IPR011990">
    <property type="entry name" value="TPR-like_helical_dom_sf"/>
</dbReference>
<dbReference type="InterPro" id="IPR019734">
    <property type="entry name" value="TPR_rpt"/>
</dbReference>
<dbReference type="PANTHER" id="PTHR45831">
    <property type="entry name" value="LD24721P"/>
    <property type="match status" value="1"/>
</dbReference>
<dbReference type="PANTHER" id="PTHR45831:SF2">
    <property type="entry name" value="LD24721P"/>
    <property type="match status" value="1"/>
</dbReference>
<dbReference type="Pfam" id="PF16546">
    <property type="entry name" value="SGTA_dimer"/>
    <property type="match status" value="1"/>
</dbReference>
<dbReference type="Pfam" id="PF00515">
    <property type="entry name" value="TPR_1"/>
    <property type="match status" value="1"/>
</dbReference>
<dbReference type="Pfam" id="PF13414">
    <property type="entry name" value="TPR_11"/>
    <property type="match status" value="1"/>
</dbReference>
<dbReference type="SMART" id="SM00028">
    <property type="entry name" value="TPR"/>
    <property type="match status" value="3"/>
</dbReference>
<dbReference type="SUPFAM" id="SSF48452">
    <property type="entry name" value="TPR-like"/>
    <property type="match status" value="1"/>
</dbReference>
<dbReference type="PROSITE" id="PS50005">
    <property type="entry name" value="TPR"/>
    <property type="match status" value="3"/>
</dbReference>
<dbReference type="PROSITE" id="PS50293">
    <property type="entry name" value="TPR_REGION"/>
    <property type="match status" value="1"/>
</dbReference>
<reference key="1">
    <citation type="journal article" date="2006" name="Nature">
        <title>Insights from the genome of the biotrophic fungal plant pathogen Ustilago maydis.</title>
        <authorList>
            <person name="Kaemper J."/>
            <person name="Kahmann R."/>
            <person name="Boelker M."/>
            <person name="Ma L.-J."/>
            <person name="Brefort T."/>
            <person name="Saville B.J."/>
            <person name="Banuett F."/>
            <person name="Kronstad J.W."/>
            <person name="Gold S.E."/>
            <person name="Mueller O."/>
            <person name="Perlin M.H."/>
            <person name="Woesten H.A.B."/>
            <person name="de Vries R."/>
            <person name="Ruiz-Herrera J."/>
            <person name="Reynaga-Pena C.G."/>
            <person name="Snetselaar K."/>
            <person name="McCann M."/>
            <person name="Perez-Martin J."/>
            <person name="Feldbruegge M."/>
            <person name="Basse C.W."/>
            <person name="Steinberg G."/>
            <person name="Ibeas J.I."/>
            <person name="Holloman W."/>
            <person name="Guzman P."/>
            <person name="Farman M.L."/>
            <person name="Stajich J.E."/>
            <person name="Sentandreu R."/>
            <person name="Gonzalez-Prieto J.M."/>
            <person name="Kennell J.C."/>
            <person name="Molina L."/>
            <person name="Schirawski J."/>
            <person name="Mendoza-Mendoza A."/>
            <person name="Greilinger D."/>
            <person name="Muench K."/>
            <person name="Roessel N."/>
            <person name="Scherer M."/>
            <person name="Vranes M."/>
            <person name="Ladendorf O."/>
            <person name="Vincon V."/>
            <person name="Fuchs U."/>
            <person name="Sandrock B."/>
            <person name="Meng S."/>
            <person name="Ho E.C.H."/>
            <person name="Cahill M.J."/>
            <person name="Boyce K.J."/>
            <person name="Klose J."/>
            <person name="Klosterman S.J."/>
            <person name="Deelstra H.J."/>
            <person name="Ortiz-Castellanos L."/>
            <person name="Li W."/>
            <person name="Sanchez-Alonso P."/>
            <person name="Schreier P.H."/>
            <person name="Haeuser-Hahn I."/>
            <person name="Vaupel M."/>
            <person name="Koopmann E."/>
            <person name="Friedrich G."/>
            <person name="Voss H."/>
            <person name="Schlueter T."/>
            <person name="Margolis J."/>
            <person name="Platt D."/>
            <person name="Swimmer C."/>
            <person name="Gnirke A."/>
            <person name="Chen F."/>
            <person name="Vysotskaia V."/>
            <person name="Mannhaupt G."/>
            <person name="Gueldener U."/>
            <person name="Muensterkoetter M."/>
            <person name="Haase D."/>
            <person name="Oesterheld M."/>
            <person name="Mewes H.-W."/>
            <person name="Mauceli E.W."/>
            <person name="DeCaprio D."/>
            <person name="Wade C.M."/>
            <person name="Butler J."/>
            <person name="Young S.K."/>
            <person name="Jaffe D.B."/>
            <person name="Calvo S.E."/>
            <person name="Nusbaum C."/>
            <person name="Galagan J.E."/>
            <person name="Birren B.W."/>
        </authorList>
    </citation>
    <scope>NUCLEOTIDE SEQUENCE [LARGE SCALE GENOMIC DNA]</scope>
    <source>
        <strain>DSM 14603 / FGSC 9021 / UM521</strain>
    </source>
</reference>
<reference key="2">
    <citation type="submission" date="2014-09" db="EMBL/GenBank/DDBJ databases">
        <authorList>
            <person name="Gueldener U."/>
            <person name="Muensterkoetter M."/>
            <person name="Walter M.C."/>
            <person name="Mannhaupt G."/>
            <person name="Kahmann R."/>
        </authorList>
    </citation>
    <scope>GENOME REANNOTATION</scope>
    <source>
        <strain>DSM 14603 / FGSC 9021 / UM521</strain>
    </source>
</reference>